<accession>Q7NX81</accession>
<proteinExistence type="inferred from homology"/>
<protein>
    <recommendedName>
        <fullName evidence="1">Large ribosomal subunit protein bL31</fullName>
    </recommendedName>
    <alternativeName>
        <fullName evidence="2">50S ribosomal protein L31</fullName>
    </alternativeName>
</protein>
<reference key="1">
    <citation type="journal article" date="2003" name="Proc. Natl. Acad. Sci. U.S.A.">
        <title>The complete genome sequence of Chromobacterium violaceum reveals remarkable and exploitable bacterial adaptability.</title>
        <authorList>
            <person name="Vasconcelos A.T.R."/>
            <person name="de Almeida D.F."/>
            <person name="Hungria M."/>
            <person name="Guimaraes C.T."/>
            <person name="Antonio R.V."/>
            <person name="Almeida F.C."/>
            <person name="de Almeida L.G.P."/>
            <person name="de Almeida R."/>
            <person name="Alves-Gomes J.A."/>
            <person name="Andrade E.M."/>
            <person name="Araripe J."/>
            <person name="de Araujo M.F.F."/>
            <person name="Astolfi-Filho S."/>
            <person name="Azevedo V."/>
            <person name="Baptista A.J."/>
            <person name="Bataus L.A.M."/>
            <person name="Batista J.S."/>
            <person name="Belo A."/>
            <person name="van den Berg C."/>
            <person name="Bogo M."/>
            <person name="Bonatto S."/>
            <person name="Bordignon J."/>
            <person name="Brigido M.M."/>
            <person name="Brito C.A."/>
            <person name="Brocchi M."/>
            <person name="Burity H.A."/>
            <person name="Camargo A.A."/>
            <person name="Cardoso D.D.P."/>
            <person name="Carneiro N.P."/>
            <person name="Carraro D.M."/>
            <person name="Carvalho C.M.B."/>
            <person name="Cascardo J.C.M."/>
            <person name="Cavada B.S."/>
            <person name="Chueire L.M.O."/>
            <person name="Creczynski-Pasa T.B."/>
            <person name="Cunha-Junior N.C."/>
            <person name="Fagundes N."/>
            <person name="Falcao C.L."/>
            <person name="Fantinatti F."/>
            <person name="Farias I.P."/>
            <person name="Felipe M.S.S."/>
            <person name="Ferrari L.P."/>
            <person name="Ferro J.A."/>
            <person name="Ferro M.I.T."/>
            <person name="Franco G.R."/>
            <person name="Freitas N.S.A."/>
            <person name="Furlan L.R."/>
            <person name="Gazzinelli R.T."/>
            <person name="Gomes E.A."/>
            <person name="Goncalves P.R."/>
            <person name="Grangeiro T.B."/>
            <person name="Grattapaglia D."/>
            <person name="Grisard E.C."/>
            <person name="Hanna E.S."/>
            <person name="Jardim S.N."/>
            <person name="Laurino J."/>
            <person name="Leoi L.C.T."/>
            <person name="Lima L.F.A."/>
            <person name="Loureiro M.F."/>
            <person name="Lyra M.C.C.P."/>
            <person name="Madeira H.M.F."/>
            <person name="Manfio G.P."/>
            <person name="Maranhao A.Q."/>
            <person name="Martins W.S."/>
            <person name="di Mauro S.M.Z."/>
            <person name="de Medeiros S.R.B."/>
            <person name="Meissner R.V."/>
            <person name="Moreira M.A.M."/>
            <person name="Nascimento F.F."/>
            <person name="Nicolas M.F."/>
            <person name="Oliveira J.G."/>
            <person name="Oliveira S.C."/>
            <person name="Paixao R.F.C."/>
            <person name="Parente J.A."/>
            <person name="Pedrosa F.O."/>
            <person name="Pena S.D.J."/>
            <person name="Pereira J.O."/>
            <person name="Pereira M."/>
            <person name="Pinto L.S.R.C."/>
            <person name="Pinto L.S."/>
            <person name="Porto J.I.R."/>
            <person name="Potrich D.P."/>
            <person name="Ramalho-Neto C.E."/>
            <person name="Reis A.M.M."/>
            <person name="Rigo L.U."/>
            <person name="Rondinelli E."/>
            <person name="Santos E.B.P."/>
            <person name="Santos F.R."/>
            <person name="Schneider M.P.C."/>
            <person name="Seuanez H.N."/>
            <person name="Silva A.M.R."/>
            <person name="da Silva A.L.C."/>
            <person name="Silva D.W."/>
            <person name="Silva R."/>
            <person name="Simoes I.C."/>
            <person name="Simon D."/>
            <person name="Soares C.M.A."/>
            <person name="Soares R.B.A."/>
            <person name="Souza E.M."/>
            <person name="Souza K.R.L."/>
            <person name="Souza R.C."/>
            <person name="Steffens M.B.R."/>
            <person name="Steindel M."/>
            <person name="Teixeira S.R."/>
            <person name="Urmenyi T."/>
            <person name="Vettore A."/>
            <person name="Wassem R."/>
            <person name="Zaha A."/>
            <person name="Simpson A.J.G."/>
        </authorList>
    </citation>
    <scope>NUCLEOTIDE SEQUENCE [LARGE SCALE GENOMIC DNA]</scope>
    <source>
        <strain>ATCC 12472 / DSM 30191 / JCM 1249 / CCUG 213 / NBRC 12614 / NCIMB 9131 / NCTC 9757 / MK</strain>
    </source>
</reference>
<gene>
    <name evidence="1" type="primary">rpmE</name>
    <name type="ordered locus">CV_1747</name>
</gene>
<dbReference type="EMBL" id="AE016825">
    <property type="protein sequence ID" value="AAQ59421.2"/>
    <property type="molecule type" value="Genomic_DNA"/>
</dbReference>
<dbReference type="RefSeq" id="WP_011135299.1">
    <property type="nucleotide sequence ID" value="NC_005085.1"/>
</dbReference>
<dbReference type="SMR" id="Q7NX81"/>
<dbReference type="STRING" id="243365.CV_1747"/>
<dbReference type="GeneID" id="66367426"/>
<dbReference type="KEGG" id="cvi:CV_1747"/>
<dbReference type="eggNOG" id="COG0254">
    <property type="taxonomic scope" value="Bacteria"/>
</dbReference>
<dbReference type="HOGENOM" id="CLU_114306_4_0_4"/>
<dbReference type="OrthoDB" id="9803251at2"/>
<dbReference type="Proteomes" id="UP000001424">
    <property type="component" value="Chromosome"/>
</dbReference>
<dbReference type="GO" id="GO:1990904">
    <property type="term" value="C:ribonucleoprotein complex"/>
    <property type="evidence" value="ECO:0007669"/>
    <property type="project" value="UniProtKB-KW"/>
</dbReference>
<dbReference type="GO" id="GO:0005840">
    <property type="term" value="C:ribosome"/>
    <property type="evidence" value="ECO:0007669"/>
    <property type="project" value="UniProtKB-KW"/>
</dbReference>
<dbReference type="GO" id="GO:0046872">
    <property type="term" value="F:metal ion binding"/>
    <property type="evidence" value="ECO:0007669"/>
    <property type="project" value="UniProtKB-KW"/>
</dbReference>
<dbReference type="GO" id="GO:0019843">
    <property type="term" value="F:rRNA binding"/>
    <property type="evidence" value="ECO:0007669"/>
    <property type="project" value="UniProtKB-KW"/>
</dbReference>
<dbReference type="GO" id="GO:0003735">
    <property type="term" value="F:structural constituent of ribosome"/>
    <property type="evidence" value="ECO:0007669"/>
    <property type="project" value="InterPro"/>
</dbReference>
<dbReference type="GO" id="GO:0006412">
    <property type="term" value="P:translation"/>
    <property type="evidence" value="ECO:0007669"/>
    <property type="project" value="UniProtKB-UniRule"/>
</dbReference>
<dbReference type="Gene3D" id="4.10.830.30">
    <property type="entry name" value="Ribosomal protein L31"/>
    <property type="match status" value="1"/>
</dbReference>
<dbReference type="HAMAP" id="MF_00501">
    <property type="entry name" value="Ribosomal_bL31_1"/>
    <property type="match status" value="1"/>
</dbReference>
<dbReference type="InterPro" id="IPR034704">
    <property type="entry name" value="Ribosomal_bL28/bL31-like_sf"/>
</dbReference>
<dbReference type="InterPro" id="IPR002150">
    <property type="entry name" value="Ribosomal_bL31"/>
</dbReference>
<dbReference type="InterPro" id="IPR027491">
    <property type="entry name" value="Ribosomal_bL31_A"/>
</dbReference>
<dbReference type="InterPro" id="IPR042105">
    <property type="entry name" value="Ribosomal_bL31_sf"/>
</dbReference>
<dbReference type="NCBIfam" id="TIGR00105">
    <property type="entry name" value="L31"/>
    <property type="match status" value="1"/>
</dbReference>
<dbReference type="NCBIfam" id="NF000612">
    <property type="entry name" value="PRK00019.1"/>
    <property type="match status" value="1"/>
</dbReference>
<dbReference type="NCBIfam" id="NF001809">
    <property type="entry name" value="PRK00528.1"/>
    <property type="match status" value="1"/>
</dbReference>
<dbReference type="PANTHER" id="PTHR33280">
    <property type="entry name" value="50S RIBOSOMAL PROTEIN L31, CHLOROPLASTIC"/>
    <property type="match status" value="1"/>
</dbReference>
<dbReference type="PANTHER" id="PTHR33280:SF6">
    <property type="entry name" value="LARGE RIBOSOMAL SUBUNIT PROTEIN BL31A"/>
    <property type="match status" value="1"/>
</dbReference>
<dbReference type="Pfam" id="PF01197">
    <property type="entry name" value="Ribosomal_L31"/>
    <property type="match status" value="1"/>
</dbReference>
<dbReference type="PRINTS" id="PR01249">
    <property type="entry name" value="RIBOSOMALL31"/>
</dbReference>
<dbReference type="SUPFAM" id="SSF143800">
    <property type="entry name" value="L28p-like"/>
    <property type="match status" value="1"/>
</dbReference>
<dbReference type="PROSITE" id="PS01143">
    <property type="entry name" value="RIBOSOMAL_L31"/>
    <property type="match status" value="1"/>
</dbReference>
<evidence type="ECO:0000255" key="1">
    <source>
        <dbReference type="HAMAP-Rule" id="MF_00501"/>
    </source>
</evidence>
<evidence type="ECO:0000305" key="2"/>
<feature type="chain" id="PRO_0000173095" description="Large ribosomal subunit protein bL31">
    <location>
        <begin position="1"/>
        <end position="71"/>
    </location>
</feature>
<feature type="binding site" evidence="1">
    <location>
        <position position="16"/>
    </location>
    <ligand>
        <name>Zn(2+)</name>
        <dbReference type="ChEBI" id="CHEBI:29105"/>
    </ligand>
</feature>
<feature type="binding site" evidence="1">
    <location>
        <position position="18"/>
    </location>
    <ligand>
        <name>Zn(2+)</name>
        <dbReference type="ChEBI" id="CHEBI:29105"/>
    </ligand>
</feature>
<feature type="binding site" evidence="1">
    <location>
        <position position="38"/>
    </location>
    <ligand>
        <name>Zn(2+)</name>
        <dbReference type="ChEBI" id="CHEBI:29105"/>
    </ligand>
</feature>
<feature type="binding site" evidence="1">
    <location>
        <position position="41"/>
    </location>
    <ligand>
        <name>Zn(2+)</name>
        <dbReference type="ChEBI" id="CHEBI:29105"/>
    </ligand>
</feature>
<comment type="function">
    <text evidence="1">Binds the 23S rRNA.</text>
</comment>
<comment type="cofactor">
    <cofactor evidence="1">
        <name>Zn(2+)</name>
        <dbReference type="ChEBI" id="CHEBI:29105"/>
    </cofactor>
    <text evidence="1">Binds 1 zinc ion per subunit.</text>
</comment>
<comment type="subunit">
    <text evidence="1">Part of the 50S ribosomal subunit.</text>
</comment>
<comment type="similarity">
    <text evidence="1">Belongs to the bacterial ribosomal protein bL31 family. Type A subfamily.</text>
</comment>
<sequence length="71" mass="8048">MKNDIHPNYKELSVTCSCGQQFVTKSTMGKDAFSIEVCSSCHPFYTGKQKIVDTAGRVDKFNQKFGSFFKR</sequence>
<organism>
    <name type="scientific">Chromobacterium violaceum (strain ATCC 12472 / DSM 30191 / JCM 1249 / CCUG 213 / NBRC 12614 / NCIMB 9131 / NCTC 9757 / MK)</name>
    <dbReference type="NCBI Taxonomy" id="243365"/>
    <lineage>
        <taxon>Bacteria</taxon>
        <taxon>Pseudomonadati</taxon>
        <taxon>Pseudomonadota</taxon>
        <taxon>Betaproteobacteria</taxon>
        <taxon>Neisseriales</taxon>
        <taxon>Chromobacteriaceae</taxon>
        <taxon>Chromobacterium</taxon>
    </lineage>
</organism>
<keyword id="KW-0479">Metal-binding</keyword>
<keyword id="KW-1185">Reference proteome</keyword>
<keyword id="KW-0687">Ribonucleoprotein</keyword>
<keyword id="KW-0689">Ribosomal protein</keyword>
<keyword id="KW-0694">RNA-binding</keyword>
<keyword id="KW-0699">rRNA-binding</keyword>
<keyword id="KW-0862">Zinc</keyword>
<name>RL31_CHRVO</name>